<evidence type="ECO:0000250" key="1"/>
<evidence type="ECO:0000255" key="2"/>
<evidence type="ECO:0000255" key="3">
    <source>
        <dbReference type="PROSITE-ProRule" id="PRU00206"/>
    </source>
</evidence>
<organism>
    <name type="scientific">Rattus norvegicus</name>
    <name type="common">Rat</name>
    <dbReference type="NCBI Taxonomy" id="10116"/>
    <lineage>
        <taxon>Eukaryota</taxon>
        <taxon>Metazoa</taxon>
        <taxon>Chordata</taxon>
        <taxon>Craniata</taxon>
        <taxon>Vertebrata</taxon>
        <taxon>Euteleostomi</taxon>
        <taxon>Mammalia</taxon>
        <taxon>Eutheria</taxon>
        <taxon>Euarchontoglires</taxon>
        <taxon>Glires</taxon>
        <taxon>Rodentia</taxon>
        <taxon>Myomorpha</taxon>
        <taxon>Muroidea</taxon>
        <taxon>Muridae</taxon>
        <taxon>Murinae</taxon>
        <taxon>Rattus</taxon>
    </lineage>
</organism>
<feature type="signal peptide" evidence="2">
    <location>
        <begin position="1"/>
        <end position="19"/>
    </location>
</feature>
<feature type="chain" id="PRO_0000034556" description="Tumor necrosis factor receptor superfamily member 4">
    <location>
        <begin position="20"/>
        <end position="271"/>
    </location>
</feature>
<feature type="topological domain" description="Extracellular" evidence="2">
    <location>
        <begin position="20"/>
        <end position="210"/>
    </location>
</feature>
<feature type="transmembrane region" description="Helical" evidence="2">
    <location>
        <begin position="211"/>
        <end position="235"/>
    </location>
</feature>
<feature type="topological domain" description="Cytoplasmic" evidence="2">
    <location>
        <begin position="236"/>
        <end position="271"/>
    </location>
</feature>
<feature type="repeat" description="TNFR-Cys 1">
    <location>
        <begin position="25"/>
        <end position="60"/>
    </location>
</feature>
<feature type="repeat" description="TNFR-Cys 2">
    <location>
        <begin position="61"/>
        <end position="102"/>
    </location>
</feature>
<feature type="repeat" description="TNFR-Cys 3; truncated">
    <location>
        <begin position="103"/>
        <end position="123"/>
    </location>
</feature>
<feature type="repeat" description="TNFR-Cys 4">
    <location>
        <begin position="124"/>
        <end position="164"/>
    </location>
</feature>
<feature type="glycosylation site" description="N-linked (GlcNAc...) asparagine" evidence="2">
    <location>
        <position position="143"/>
    </location>
</feature>
<feature type="disulfide bond" evidence="3">
    <location>
        <begin position="26"/>
        <end position="37"/>
    </location>
</feature>
<feature type="disulfide bond" evidence="3">
    <location>
        <begin position="38"/>
        <end position="51"/>
    </location>
</feature>
<feature type="disulfide bond" evidence="3">
    <location>
        <begin position="41"/>
        <end position="59"/>
    </location>
</feature>
<feature type="disulfide bond" evidence="3">
    <location>
        <begin position="62"/>
        <end position="76"/>
    </location>
</feature>
<feature type="disulfide bond" evidence="3">
    <location>
        <begin position="79"/>
        <end position="94"/>
    </location>
</feature>
<feature type="disulfide bond" evidence="3">
    <location>
        <begin position="82"/>
        <end position="102"/>
    </location>
</feature>
<feature type="disulfide bond" evidence="3">
    <location>
        <begin position="104"/>
        <end position="122"/>
    </location>
</feature>
<feature type="disulfide bond" evidence="3">
    <location>
        <begin position="125"/>
        <end position="138"/>
    </location>
</feature>
<feature type="disulfide bond" evidence="3">
    <location>
        <begin position="144"/>
        <end position="163"/>
    </location>
</feature>
<protein>
    <recommendedName>
        <fullName>Tumor necrosis factor receptor superfamily member 4</fullName>
    </recommendedName>
    <alternativeName>
        <fullName>MRC OX40</fullName>
    </alternativeName>
    <alternativeName>
        <fullName>OX40 antigen</fullName>
    </alternativeName>
    <alternativeName>
        <fullName>OX40L receptor</fullName>
    </alternativeName>
    <cdAntigenName>CD134</cdAntigenName>
</protein>
<name>TNR4_RAT</name>
<proteinExistence type="evidence at transcript level"/>
<accession>P15725</accession>
<sequence length="271" mass="29895">MYVWVQQPTAFLLLGLSLGVTVKLNCVKDTYPSGHKCCRECQPGHGMVSRCDHTRDTVCHPCEPGFYNEAVNYDTCKQCTQCNHRSGSELKQNCTPTEDTVCQCRPGTQPRQDSSHKLGVDCVPCPPGHFSPGSNQACKPWTNCTLSGKQIRHPASNSLDTVCEDRSLLATLLWETQRTTFRPTTVPSTTVWPRTSQLPSTPTLVAPEGPAFAVILGLGLGLLAPLTVLLALYLLRKAWRSPNTPKPCWGNSFRTPIQEEQTDTHFTLAKI</sequence>
<dbReference type="EMBL" id="X17037">
    <property type="protein sequence ID" value="CAA34897.1"/>
    <property type="molecule type" value="mRNA"/>
</dbReference>
<dbReference type="PIR" id="S12783">
    <property type="entry name" value="S12783"/>
</dbReference>
<dbReference type="RefSeq" id="NP_037181.1">
    <property type="nucleotide sequence ID" value="NM_013049.1"/>
</dbReference>
<dbReference type="SMR" id="P15725"/>
<dbReference type="FunCoup" id="P15725">
    <property type="interactions" value="11"/>
</dbReference>
<dbReference type="IntAct" id="P15725">
    <property type="interactions" value="1"/>
</dbReference>
<dbReference type="STRING" id="10116.ENSRNOP00000027251"/>
<dbReference type="GlyCosmos" id="P15725">
    <property type="glycosylation" value="1 site, No reported glycans"/>
</dbReference>
<dbReference type="GlyGen" id="P15725">
    <property type="glycosylation" value="1 site"/>
</dbReference>
<dbReference type="PhosphoSitePlus" id="P15725"/>
<dbReference type="PaxDb" id="10116-ENSRNOP00000027251"/>
<dbReference type="Ensembl" id="ENSRNOT00000027251.5">
    <property type="protein sequence ID" value="ENSRNOP00000027251.3"/>
    <property type="gene ID" value="ENSRNOG00000020106.5"/>
</dbReference>
<dbReference type="GeneID" id="25572"/>
<dbReference type="KEGG" id="rno:25572"/>
<dbReference type="AGR" id="RGD:3920"/>
<dbReference type="CTD" id="7293"/>
<dbReference type="RGD" id="3920">
    <property type="gene designation" value="Tnfrsf4"/>
</dbReference>
<dbReference type="eggNOG" id="ENOG502SB1F">
    <property type="taxonomic scope" value="Eukaryota"/>
</dbReference>
<dbReference type="GeneTree" id="ENSGT00730000111452"/>
<dbReference type="HOGENOM" id="CLU_092451_0_0_1"/>
<dbReference type="InParanoid" id="P15725"/>
<dbReference type="OMA" id="MVSRCSR"/>
<dbReference type="OrthoDB" id="9950067at2759"/>
<dbReference type="PhylomeDB" id="P15725"/>
<dbReference type="TreeFam" id="TF330135"/>
<dbReference type="Reactome" id="R-RNO-5669034">
    <property type="pathway name" value="TNFs bind their physiological receptors"/>
</dbReference>
<dbReference type="PRO" id="PR:P15725"/>
<dbReference type="Proteomes" id="UP000002494">
    <property type="component" value="Chromosome 5"/>
</dbReference>
<dbReference type="Bgee" id="ENSRNOG00000020106">
    <property type="expression patterns" value="Expressed in thymus and 18 other cell types or tissues"/>
</dbReference>
<dbReference type="GO" id="GO:0009986">
    <property type="term" value="C:cell surface"/>
    <property type="evidence" value="ECO:0000315"/>
    <property type="project" value="BHF-UCL"/>
</dbReference>
<dbReference type="GO" id="GO:0009897">
    <property type="term" value="C:external side of plasma membrane"/>
    <property type="evidence" value="ECO:0000266"/>
    <property type="project" value="RGD"/>
</dbReference>
<dbReference type="GO" id="GO:0005886">
    <property type="term" value="C:plasma membrane"/>
    <property type="evidence" value="ECO:0000266"/>
    <property type="project" value="RGD"/>
</dbReference>
<dbReference type="GO" id="GO:0005031">
    <property type="term" value="F:tumor necrosis factor receptor activity"/>
    <property type="evidence" value="ECO:0000266"/>
    <property type="project" value="RGD"/>
</dbReference>
<dbReference type="GO" id="GO:0006968">
    <property type="term" value="P:cellular defense response"/>
    <property type="evidence" value="ECO:0000266"/>
    <property type="project" value="RGD"/>
</dbReference>
<dbReference type="GO" id="GO:0006954">
    <property type="term" value="P:inflammatory response"/>
    <property type="evidence" value="ECO:0000266"/>
    <property type="project" value="RGD"/>
</dbReference>
<dbReference type="GO" id="GO:0070236">
    <property type="term" value="P:negative regulation of activation-induced cell death of T cells"/>
    <property type="evidence" value="ECO:0000266"/>
    <property type="project" value="RGD"/>
</dbReference>
<dbReference type="GO" id="GO:0001818">
    <property type="term" value="P:negative regulation of cytokine production"/>
    <property type="evidence" value="ECO:0000266"/>
    <property type="project" value="RGD"/>
</dbReference>
<dbReference type="GO" id="GO:0045892">
    <property type="term" value="P:negative regulation of DNA-templated transcription"/>
    <property type="evidence" value="ECO:0000266"/>
    <property type="project" value="RGD"/>
</dbReference>
<dbReference type="GO" id="GO:2001237">
    <property type="term" value="P:negative regulation of extrinsic apoptotic signaling pathway"/>
    <property type="evidence" value="ECO:0000266"/>
    <property type="project" value="RGD"/>
</dbReference>
<dbReference type="GO" id="GO:0030890">
    <property type="term" value="P:positive regulation of B cell proliferation"/>
    <property type="evidence" value="ECO:0000266"/>
    <property type="project" value="RGD"/>
</dbReference>
<dbReference type="GO" id="GO:0002639">
    <property type="term" value="P:positive regulation of immunoglobulin production"/>
    <property type="evidence" value="ECO:0000266"/>
    <property type="project" value="RGD"/>
</dbReference>
<dbReference type="GO" id="GO:0042981">
    <property type="term" value="P:regulation of apoptotic process"/>
    <property type="evidence" value="ECO:0000266"/>
    <property type="project" value="RGD"/>
</dbReference>
<dbReference type="GO" id="GO:0042098">
    <property type="term" value="P:T cell proliferation"/>
    <property type="evidence" value="ECO:0000315"/>
    <property type="project" value="BHF-UCL"/>
</dbReference>
<dbReference type="CDD" id="cd13406">
    <property type="entry name" value="TNFRSF4"/>
    <property type="match status" value="1"/>
</dbReference>
<dbReference type="FunFam" id="2.10.50.10:FF:000026">
    <property type="entry name" value="Tumor necrosis factor receptor superfamily member 4"/>
    <property type="match status" value="1"/>
</dbReference>
<dbReference type="FunFam" id="2.10.50.10:FF:000038">
    <property type="entry name" value="Tumor necrosis factor receptor superfamily member 4"/>
    <property type="match status" value="1"/>
</dbReference>
<dbReference type="Gene3D" id="2.10.50.10">
    <property type="entry name" value="Tumor Necrosis Factor Receptor, subunit A, domain 2"/>
    <property type="match status" value="2"/>
</dbReference>
<dbReference type="InterPro" id="IPR001368">
    <property type="entry name" value="TNFR/NGFR_Cys_rich_reg"/>
</dbReference>
<dbReference type="InterPro" id="IPR020445">
    <property type="entry name" value="TNFR_4"/>
</dbReference>
<dbReference type="InterPro" id="IPR034022">
    <property type="entry name" value="TNFRSF4_N"/>
</dbReference>
<dbReference type="PANTHER" id="PTHR47881">
    <property type="entry name" value="TUMOR NECROSIS FACTOR RECEPTOR SUBFAMILY MEMBER 4"/>
    <property type="match status" value="1"/>
</dbReference>
<dbReference type="PANTHER" id="PTHR47881:SF1">
    <property type="entry name" value="TUMOR NECROSIS FACTOR RECEPTOR SUPERFAMILY MEMBER 4"/>
    <property type="match status" value="1"/>
</dbReference>
<dbReference type="Pfam" id="PF00020">
    <property type="entry name" value="TNFR_c6"/>
    <property type="match status" value="3"/>
</dbReference>
<dbReference type="PRINTS" id="PR01921">
    <property type="entry name" value="TNFACTORR4"/>
</dbReference>
<dbReference type="SMART" id="SM00208">
    <property type="entry name" value="TNFR"/>
    <property type="match status" value="3"/>
</dbReference>
<dbReference type="SUPFAM" id="SSF57586">
    <property type="entry name" value="TNF receptor-like"/>
    <property type="match status" value="3"/>
</dbReference>
<dbReference type="PROSITE" id="PS00652">
    <property type="entry name" value="TNFR_NGFR_1"/>
    <property type="match status" value="2"/>
</dbReference>
<dbReference type="PROSITE" id="PS50050">
    <property type="entry name" value="TNFR_NGFR_2"/>
    <property type="match status" value="2"/>
</dbReference>
<reference key="1">
    <citation type="journal article" date="1990" name="EMBO J.">
        <title>Characterization of the MRC OX40 antigen of activated CD4 positive T lymphocytes -- a molecule related to nerve growth factor receptor.</title>
        <authorList>
            <person name="Mallett S."/>
            <person name="Fossum S."/>
            <person name="Barclay A.N."/>
        </authorList>
    </citation>
    <scope>NUCLEOTIDE SEQUENCE [MRNA]</scope>
    <source>
        <tissue>T-cell</tissue>
    </source>
</reference>
<comment type="function">
    <text evidence="1">Receptor for TNFSF4/OX40L/GP34. Is a costimulatory molecule implicated in long-term T-cell immunity (By similarity).</text>
</comment>
<comment type="subunit">
    <text evidence="1">Interacts with TRAF2, TRAF3 and TRAF5.</text>
</comment>
<comment type="subcellular location">
    <subcellularLocation>
        <location>Membrane</location>
        <topology>Single-pass type I membrane protein</topology>
    </subcellularLocation>
</comment>
<comment type="tissue specificity">
    <text>Activated T-cells.</text>
</comment>
<gene>
    <name type="primary">Tnfrsf4</name>
    <name type="synonym">Ox40</name>
    <name type="synonym">Txgp1l</name>
</gene>
<keyword id="KW-1015">Disulfide bond</keyword>
<keyword id="KW-0325">Glycoprotein</keyword>
<keyword id="KW-0472">Membrane</keyword>
<keyword id="KW-0675">Receptor</keyword>
<keyword id="KW-1185">Reference proteome</keyword>
<keyword id="KW-0677">Repeat</keyword>
<keyword id="KW-0732">Signal</keyword>
<keyword id="KW-0812">Transmembrane</keyword>
<keyword id="KW-1133">Transmembrane helix</keyword>